<evidence type="ECO:0000250" key="1"/>
<evidence type="ECO:0000255" key="2"/>
<evidence type="ECO:0000305" key="3"/>
<organism>
    <name type="scientific">Wickerhamomyces canadensis</name>
    <name type="common">Yeast</name>
    <name type="synonym">Pichia canadensis</name>
    <dbReference type="NCBI Taxonomy" id="1156965"/>
    <lineage>
        <taxon>Eukaryota</taxon>
        <taxon>Fungi</taxon>
        <taxon>Dikarya</taxon>
        <taxon>Ascomycota</taxon>
        <taxon>Saccharomycotina</taxon>
        <taxon>Saccharomycetes</taxon>
        <taxon>Phaffomycetales</taxon>
        <taxon>Wickerhamomycetaceae</taxon>
        <taxon>Wickerhamomyces</taxon>
    </lineage>
</organism>
<proteinExistence type="inferred from homology"/>
<dbReference type="EMBL" id="D31785">
    <property type="protein sequence ID" value="BAA06576.1"/>
    <property type="molecule type" value="Genomic_DNA"/>
</dbReference>
<dbReference type="PIR" id="S58753">
    <property type="entry name" value="S58753"/>
</dbReference>
<dbReference type="RefSeq" id="NP_038221.1">
    <property type="nucleotide sequence ID" value="NC_001762.1"/>
</dbReference>
<dbReference type="SMR" id="P48881"/>
<dbReference type="GeneID" id="800568"/>
<dbReference type="GO" id="GO:0031966">
    <property type="term" value="C:mitochondrial membrane"/>
    <property type="evidence" value="ECO:0007669"/>
    <property type="project" value="UniProtKB-SubCell"/>
</dbReference>
<dbReference type="GO" id="GO:0045259">
    <property type="term" value="C:proton-transporting ATP synthase complex"/>
    <property type="evidence" value="ECO:0007669"/>
    <property type="project" value="UniProtKB-KW"/>
</dbReference>
<dbReference type="GO" id="GO:0033177">
    <property type="term" value="C:proton-transporting two-sector ATPase complex, proton-transporting domain"/>
    <property type="evidence" value="ECO:0007669"/>
    <property type="project" value="InterPro"/>
</dbReference>
<dbReference type="GO" id="GO:0008289">
    <property type="term" value="F:lipid binding"/>
    <property type="evidence" value="ECO:0007669"/>
    <property type="project" value="UniProtKB-KW"/>
</dbReference>
<dbReference type="GO" id="GO:0015078">
    <property type="term" value="F:proton transmembrane transporter activity"/>
    <property type="evidence" value="ECO:0007669"/>
    <property type="project" value="InterPro"/>
</dbReference>
<dbReference type="GO" id="GO:0015986">
    <property type="term" value="P:proton motive force-driven ATP synthesis"/>
    <property type="evidence" value="ECO:0007669"/>
    <property type="project" value="InterPro"/>
</dbReference>
<dbReference type="CDD" id="cd18182">
    <property type="entry name" value="ATP-synt_Fo_c_ATP5G3"/>
    <property type="match status" value="1"/>
</dbReference>
<dbReference type="FunFam" id="1.20.20.10:FF:000003">
    <property type="entry name" value="Atp synthase f complex subunit mitochondrial"/>
    <property type="match status" value="1"/>
</dbReference>
<dbReference type="Gene3D" id="1.20.20.10">
    <property type="entry name" value="F1F0 ATP synthase subunit C"/>
    <property type="match status" value="1"/>
</dbReference>
<dbReference type="HAMAP" id="MF_01396">
    <property type="entry name" value="ATP_synth_c_bact"/>
    <property type="match status" value="1"/>
</dbReference>
<dbReference type="InterPro" id="IPR000454">
    <property type="entry name" value="ATP_synth_F0_csu"/>
</dbReference>
<dbReference type="InterPro" id="IPR020537">
    <property type="entry name" value="ATP_synth_F0_csu_DDCD_BS"/>
</dbReference>
<dbReference type="InterPro" id="IPR038662">
    <property type="entry name" value="ATP_synth_F0_csu_sf"/>
</dbReference>
<dbReference type="InterPro" id="IPR002379">
    <property type="entry name" value="ATPase_proteolipid_c-like_dom"/>
</dbReference>
<dbReference type="InterPro" id="IPR035921">
    <property type="entry name" value="F/V-ATP_Csub_sf"/>
</dbReference>
<dbReference type="PANTHER" id="PTHR10031">
    <property type="entry name" value="ATP SYNTHASE LIPID-BINDING PROTEIN, MITOCHONDRIAL"/>
    <property type="match status" value="1"/>
</dbReference>
<dbReference type="PANTHER" id="PTHR10031:SF0">
    <property type="entry name" value="ATPASE PROTEIN 9"/>
    <property type="match status" value="1"/>
</dbReference>
<dbReference type="Pfam" id="PF00137">
    <property type="entry name" value="ATP-synt_C"/>
    <property type="match status" value="1"/>
</dbReference>
<dbReference type="PRINTS" id="PR00124">
    <property type="entry name" value="ATPASEC"/>
</dbReference>
<dbReference type="SUPFAM" id="SSF81333">
    <property type="entry name" value="F1F0 ATP synthase subunit C"/>
    <property type="match status" value="1"/>
</dbReference>
<dbReference type="PROSITE" id="PS00605">
    <property type="entry name" value="ATPASE_C"/>
    <property type="match status" value="1"/>
</dbReference>
<keyword id="KW-0138">CF(0)</keyword>
<keyword id="KW-0375">Hydrogen ion transport</keyword>
<keyword id="KW-0406">Ion transport</keyword>
<keyword id="KW-0446">Lipid-binding</keyword>
<keyword id="KW-0472">Membrane</keyword>
<keyword id="KW-0496">Mitochondrion</keyword>
<keyword id="KW-0812">Transmembrane</keyword>
<keyword id="KW-1133">Transmembrane helix</keyword>
<keyword id="KW-0813">Transport</keyword>
<comment type="function">
    <text>Mitochondrial membrane ATP synthase (F(1)F(0) ATP synthase or Complex V) produces ATP from ADP in the presence of a proton gradient across the membrane which is generated by electron transport complexes of the respiratory chain. F-type ATPases consist of two structural domains, F(1) - containing the extramembraneous catalytic core and F(0) - containing the membrane proton channel, linked together by a central stalk and a peripheral stalk. During catalysis, ATP synthesis in the catalytic domain of F(1) is coupled via a rotary mechanism of the central stalk subunits to proton translocation. Part of the complex F(0) domain. A homomeric c-ring of probably 10 subunits is part of the complex rotary element.</text>
</comment>
<comment type="subunit">
    <text>F-type ATPases have 2 components, CF(1) - the catalytic core - and CF(0) - the membrane proton channel. CF(1) has five subunits: alpha(3), beta(3), gamma(1), delta(1), epsilon(1). CF(0) has three main subunits: a, b and c.</text>
</comment>
<comment type="subcellular location">
    <subcellularLocation>
        <location evidence="3">Mitochondrion membrane</location>
        <topology evidence="3">Multi-pass membrane protein</topology>
    </subcellularLocation>
</comment>
<comment type="similarity">
    <text evidence="3">Belongs to the ATPase C chain family.</text>
</comment>
<protein>
    <recommendedName>
        <fullName>ATP synthase subunit 9, mitochondrial</fullName>
    </recommendedName>
    <alternativeName>
        <fullName>Lipid-binding protein</fullName>
    </alternativeName>
</protein>
<feature type="chain" id="PRO_0000112232" description="ATP synthase subunit 9, mitochondrial">
    <location>
        <begin position="1"/>
        <end position="76"/>
    </location>
</feature>
<feature type="transmembrane region" description="Helical" evidence="2">
    <location>
        <begin position="14"/>
        <end position="34"/>
    </location>
</feature>
<feature type="transmembrane region" description="Helical" evidence="2">
    <location>
        <begin position="52"/>
        <end position="72"/>
    </location>
</feature>
<feature type="site" description="Reversibly protonated during proton transport" evidence="1">
    <location>
        <position position="59"/>
    </location>
</feature>
<geneLocation type="mitochondrion"/>
<sequence>MQLVLAAKYIGAAIATIGLLGAGIGIAIVFAALINGTSRNPSLRNTLFPFAILGFALSEATGLFCLMISFLLLYGV</sequence>
<name>ATP9_WICCA</name>
<accession>P48881</accession>
<gene>
    <name type="primary">ATP9</name>
</gene>
<reference key="1">
    <citation type="journal article" date="1995" name="Curr. Genet.">
        <title>The complete mitochondrial DNA sequence of Hansenula wingei reveals new characteristics of yeast mitochondria.</title>
        <authorList>
            <person name="Sekito T."/>
            <person name="Okamoto K."/>
            <person name="Kitano H."/>
            <person name="Yoshida K."/>
        </authorList>
    </citation>
    <scope>NUCLEOTIDE SEQUENCE [LARGE SCALE GENOMIC DNA]</scope>
    <source>
        <strain>21</strain>
    </source>
</reference>